<reference key="1">
    <citation type="submission" date="2003-06" db="EMBL/GenBank/DDBJ databases">
        <title>The complete genome sequence of Haemophilus ducreyi.</title>
        <authorList>
            <person name="Munson R.S. Jr."/>
            <person name="Ray W.C."/>
            <person name="Mahairas G."/>
            <person name="Sabo P."/>
            <person name="Mungur R."/>
            <person name="Johnson L."/>
            <person name="Nguyen D."/>
            <person name="Wang J."/>
            <person name="Forst C."/>
            <person name="Hood L."/>
        </authorList>
    </citation>
    <scope>NUCLEOTIDE SEQUENCE [LARGE SCALE GENOMIC DNA]</scope>
    <source>
        <strain>35000HP / ATCC 700724</strain>
    </source>
</reference>
<accession>Q7VKD2</accession>
<comment type="function">
    <text evidence="1">One of the primary rRNA binding proteins, it binds directly near the 3'-end of the 23S rRNA, where it nucleates assembly of the 50S subunit.</text>
</comment>
<comment type="subunit">
    <text evidence="1">Part of the 50S ribosomal subunit. Forms a cluster with proteins L14 and L19.</text>
</comment>
<comment type="PTM">
    <text evidence="1">Methylated by PrmB.</text>
</comment>
<comment type="similarity">
    <text evidence="1">Belongs to the universal ribosomal protein uL3 family.</text>
</comment>
<name>RL3_HAEDU</name>
<proteinExistence type="inferred from homology"/>
<dbReference type="EMBL" id="AE017143">
    <property type="protein sequence ID" value="AAP96700.1"/>
    <property type="molecule type" value="Genomic_DNA"/>
</dbReference>
<dbReference type="RefSeq" id="WP_010945721.1">
    <property type="nucleotide sequence ID" value="NC_002940.2"/>
</dbReference>
<dbReference type="SMR" id="Q7VKD2"/>
<dbReference type="STRING" id="233412.HD_1983"/>
<dbReference type="GeneID" id="60733543"/>
<dbReference type="KEGG" id="hdu:HD_1983"/>
<dbReference type="eggNOG" id="COG0087">
    <property type="taxonomic scope" value="Bacteria"/>
</dbReference>
<dbReference type="HOGENOM" id="CLU_044142_4_1_6"/>
<dbReference type="OrthoDB" id="9806135at2"/>
<dbReference type="Proteomes" id="UP000001022">
    <property type="component" value="Chromosome"/>
</dbReference>
<dbReference type="GO" id="GO:0022625">
    <property type="term" value="C:cytosolic large ribosomal subunit"/>
    <property type="evidence" value="ECO:0007669"/>
    <property type="project" value="TreeGrafter"/>
</dbReference>
<dbReference type="GO" id="GO:0019843">
    <property type="term" value="F:rRNA binding"/>
    <property type="evidence" value="ECO:0007669"/>
    <property type="project" value="UniProtKB-UniRule"/>
</dbReference>
<dbReference type="GO" id="GO:0003735">
    <property type="term" value="F:structural constituent of ribosome"/>
    <property type="evidence" value="ECO:0007669"/>
    <property type="project" value="InterPro"/>
</dbReference>
<dbReference type="GO" id="GO:0006412">
    <property type="term" value="P:translation"/>
    <property type="evidence" value="ECO:0007669"/>
    <property type="project" value="UniProtKB-UniRule"/>
</dbReference>
<dbReference type="FunFam" id="2.40.30.10:FF:000004">
    <property type="entry name" value="50S ribosomal protein L3"/>
    <property type="match status" value="1"/>
</dbReference>
<dbReference type="FunFam" id="3.30.160.810:FF:000001">
    <property type="entry name" value="50S ribosomal protein L3"/>
    <property type="match status" value="1"/>
</dbReference>
<dbReference type="Gene3D" id="3.30.160.810">
    <property type="match status" value="1"/>
</dbReference>
<dbReference type="Gene3D" id="2.40.30.10">
    <property type="entry name" value="Translation factors"/>
    <property type="match status" value="1"/>
</dbReference>
<dbReference type="HAMAP" id="MF_01325_B">
    <property type="entry name" value="Ribosomal_uL3_B"/>
    <property type="match status" value="1"/>
</dbReference>
<dbReference type="InterPro" id="IPR000597">
    <property type="entry name" value="Ribosomal_uL3"/>
</dbReference>
<dbReference type="InterPro" id="IPR019927">
    <property type="entry name" value="Ribosomal_uL3_bac/org-type"/>
</dbReference>
<dbReference type="InterPro" id="IPR019926">
    <property type="entry name" value="Ribosomal_uL3_CS"/>
</dbReference>
<dbReference type="InterPro" id="IPR009000">
    <property type="entry name" value="Transl_B-barrel_sf"/>
</dbReference>
<dbReference type="NCBIfam" id="TIGR03625">
    <property type="entry name" value="L3_bact"/>
    <property type="match status" value="1"/>
</dbReference>
<dbReference type="PANTHER" id="PTHR11229">
    <property type="entry name" value="50S RIBOSOMAL PROTEIN L3"/>
    <property type="match status" value="1"/>
</dbReference>
<dbReference type="PANTHER" id="PTHR11229:SF16">
    <property type="entry name" value="LARGE RIBOSOMAL SUBUNIT PROTEIN UL3C"/>
    <property type="match status" value="1"/>
</dbReference>
<dbReference type="Pfam" id="PF00297">
    <property type="entry name" value="Ribosomal_L3"/>
    <property type="match status" value="1"/>
</dbReference>
<dbReference type="SUPFAM" id="SSF50447">
    <property type="entry name" value="Translation proteins"/>
    <property type="match status" value="1"/>
</dbReference>
<dbReference type="PROSITE" id="PS00474">
    <property type="entry name" value="RIBOSOMAL_L3"/>
    <property type="match status" value="1"/>
</dbReference>
<protein>
    <recommendedName>
        <fullName evidence="1">Large ribosomal subunit protein uL3</fullName>
    </recommendedName>
    <alternativeName>
        <fullName evidence="2">50S ribosomal protein L3</fullName>
    </alternativeName>
</protein>
<gene>
    <name evidence="1" type="primary">rplC</name>
    <name type="ordered locus">HD_1983</name>
</gene>
<evidence type="ECO:0000255" key="1">
    <source>
        <dbReference type="HAMAP-Rule" id="MF_01325"/>
    </source>
</evidence>
<evidence type="ECO:0000305" key="2"/>
<keyword id="KW-0488">Methylation</keyword>
<keyword id="KW-1185">Reference proteome</keyword>
<keyword id="KW-0687">Ribonucleoprotein</keyword>
<keyword id="KW-0689">Ribosomal protein</keyword>
<keyword id="KW-0694">RNA-binding</keyword>
<keyword id="KW-0699">rRNA-binding</keyword>
<feature type="chain" id="PRO_0000077105" description="Large ribosomal subunit protein uL3">
    <location>
        <begin position="1"/>
        <end position="208"/>
    </location>
</feature>
<feature type="modified residue" description="N5-methylglutamine" evidence="1">
    <location>
        <position position="149"/>
    </location>
</feature>
<sequence>MIGLIGRKVGMTRVFNEDGVSIPVTVIEIEANRVTQVKTLENDGYSAIQVTTGTKKASRVTKPEAGHFVKAGVEAGRGLWEFRTEGEEFTLGQEINVDIFADVKKVDVTGTSKGKGFAGGVKRWNFRTQDATHGNSLSHRVLGSIGQNQTPGRVFKGKKMAGHLGAERVTVQSLEVVRVDAERKLLLVKGAVPGATNSNVIVKPAVKA</sequence>
<organism>
    <name type="scientific">Haemophilus ducreyi (strain 35000HP / ATCC 700724)</name>
    <dbReference type="NCBI Taxonomy" id="233412"/>
    <lineage>
        <taxon>Bacteria</taxon>
        <taxon>Pseudomonadati</taxon>
        <taxon>Pseudomonadota</taxon>
        <taxon>Gammaproteobacteria</taxon>
        <taxon>Pasteurellales</taxon>
        <taxon>Pasteurellaceae</taxon>
        <taxon>Haemophilus</taxon>
    </lineage>
</organism>